<keyword id="KW-0665">Pyrimidine biosynthesis</keyword>
<keyword id="KW-1185">Reference proteome</keyword>
<keyword id="KW-0808">Transferase</keyword>
<gene>
    <name evidence="1" type="primary">pyrB</name>
    <name type="ordered locus">ECA0382</name>
</gene>
<reference key="1">
    <citation type="journal article" date="2004" name="Proc. Natl. Acad. Sci. U.S.A.">
        <title>Genome sequence of the enterobacterial phytopathogen Erwinia carotovora subsp. atroseptica and characterization of virulence factors.</title>
        <authorList>
            <person name="Bell K.S."/>
            <person name="Sebaihia M."/>
            <person name="Pritchard L."/>
            <person name="Holden M.T.G."/>
            <person name="Hyman L.J."/>
            <person name="Holeva M.C."/>
            <person name="Thomson N.R."/>
            <person name="Bentley S.D."/>
            <person name="Churcher L.J.C."/>
            <person name="Mungall K."/>
            <person name="Atkin R."/>
            <person name="Bason N."/>
            <person name="Brooks K."/>
            <person name="Chillingworth T."/>
            <person name="Clark K."/>
            <person name="Doggett J."/>
            <person name="Fraser A."/>
            <person name="Hance Z."/>
            <person name="Hauser H."/>
            <person name="Jagels K."/>
            <person name="Moule S."/>
            <person name="Norbertczak H."/>
            <person name="Ormond D."/>
            <person name="Price C."/>
            <person name="Quail M.A."/>
            <person name="Sanders M."/>
            <person name="Walker D."/>
            <person name="Whitehead S."/>
            <person name="Salmond G.P.C."/>
            <person name="Birch P.R.J."/>
            <person name="Parkhill J."/>
            <person name="Toth I.K."/>
        </authorList>
    </citation>
    <scope>NUCLEOTIDE SEQUENCE [LARGE SCALE GENOMIC DNA]</scope>
    <source>
        <strain>SCRI 1043 / ATCC BAA-672</strain>
    </source>
</reference>
<name>PYRB_PECAS</name>
<accession>Q6DA73</accession>
<organism>
    <name type="scientific">Pectobacterium atrosepticum (strain SCRI 1043 / ATCC BAA-672)</name>
    <name type="common">Erwinia carotovora subsp. atroseptica</name>
    <dbReference type="NCBI Taxonomy" id="218491"/>
    <lineage>
        <taxon>Bacteria</taxon>
        <taxon>Pseudomonadati</taxon>
        <taxon>Pseudomonadota</taxon>
        <taxon>Gammaproteobacteria</taxon>
        <taxon>Enterobacterales</taxon>
        <taxon>Pectobacteriaceae</taxon>
        <taxon>Pectobacterium</taxon>
    </lineage>
</organism>
<comment type="function">
    <text evidence="1">Catalyzes the condensation of carbamoyl phosphate and aspartate to form carbamoyl aspartate and inorganic phosphate, the committed step in the de novo pyrimidine nucleotide biosynthesis pathway.</text>
</comment>
<comment type="catalytic activity">
    <reaction evidence="1">
        <text>carbamoyl phosphate + L-aspartate = N-carbamoyl-L-aspartate + phosphate + H(+)</text>
        <dbReference type="Rhea" id="RHEA:20013"/>
        <dbReference type="ChEBI" id="CHEBI:15378"/>
        <dbReference type="ChEBI" id="CHEBI:29991"/>
        <dbReference type="ChEBI" id="CHEBI:32814"/>
        <dbReference type="ChEBI" id="CHEBI:43474"/>
        <dbReference type="ChEBI" id="CHEBI:58228"/>
        <dbReference type="EC" id="2.1.3.2"/>
    </reaction>
</comment>
<comment type="pathway">
    <text evidence="1">Pyrimidine metabolism; UMP biosynthesis via de novo pathway; (S)-dihydroorotate from bicarbonate: step 2/3.</text>
</comment>
<comment type="subunit">
    <text evidence="1">Heterododecamer (2C3:3R2) of six catalytic PyrB chains organized as two trimers (C3), and six regulatory PyrI chains organized as three dimers (R2).</text>
</comment>
<comment type="similarity">
    <text evidence="1">Belongs to the aspartate/ornithine carbamoyltransferase superfamily. ATCase family.</text>
</comment>
<proteinExistence type="inferred from homology"/>
<evidence type="ECO:0000255" key="1">
    <source>
        <dbReference type="HAMAP-Rule" id="MF_00001"/>
    </source>
</evidence>
<sequence length="311" mass="34575">MVNPLYQKHIISINDLSREDLELALNVAASLKAKPQPELLKHKVIASCFFEASTRTRLSFETAMHRLGASVVGFADSNNTSLGKKGETLADTISVISQYVDAIVMRHPQEGASRLATEFSGGIPVLNAGDGANQHPTQTLLDLFTIQETQGRLNNINIAMVGDLKYGRTVHSLTQALAKFEGNRFYFIAPDALAMPDYILSMLKEKNIAYSLHNSIDEVVGELDILYMTRVQKERLDPSEYINIKSQFVLRAADLDNARPNLKVLHPLPRVDEITIDVDTTPYAYYFQQAGNGIYARQALLALVLNRELVL</sequence>
<dbReference type="EC" id="2.1.3.2" evidence="1"/>
<dbReference type="EMBL" id="BX950851">
    <property type="protein sequence ID" value="CAG73301.1"/>
    <property type="molecule type" value="Genomic_DNA"/>
</dbReference>
<dbReference type="RefSeq" id="WP_011092012.1">
    <property type="nucleotide sequence ID" value="NC_004547.2"/>
</dbReference>
<dbReference type="SMR" id="Q6DA73"/>
<dbReference type="STRING" id="218491.ECA0382"/>
<dbReference type="GeneID" id="57207251"/>
<dbReference type="KEGG" id="eca:ECA0382"/>
<dbReference type="PATRIC" id="fig|218491.5.peg.386"/>
<dbReference type="eggNOG" id="COG0540">
    <property type="taxonomic scope" value="Bacteria"/>
</dbReference>
<dbReference type="HOGENOM" id="CLU_043846_1_2_6"/>
<dbReference type="OrthoDB" id="9774690at2"/>
<dbReference type="UniPathway" id="UPA00070">
    <property type="reaction ID" value="UER00116"/>
</dbReference>
<dbReference type="Proteomes" id="UP000007966">
    <property type="component" value="Chromosome"/>
</dbReference>
<dbReference type="GO" id="GO:0005829">
    <property type="term" value="C:cytosol"/>
    <property type="evidence" value="ECO:0007669"/>
    <property type="project" value="TreeGrafter"/>
</dbReference>
<dbReference type="GO" id="GO:0016597">
    <property type="term" value="F:amino acid binding"/>
    <property type="evidence" value="ECO:0007669"/>
    <property type="project" value="InterPro"/>
</dbReference>
<dbReference type="GO" id="GO:0004070">
    <property type="term" value="F:aspartate carbamoyltransferase activity"/>
    <property type="evidence" value="ECO:0007669"/>
    <property type="project" value="UniProtKB-UniRule"/>
</dbReference>
<dbReference type="GO" id="GO:0006207">
    <property type="term" value="P:'de novo' pyrimidine nucleobase biosynthetic process"/>
    <property type="evidence" value="ECO:0007669"/>
    <property type="project" value="InterPro"/>
</dbReference>
<dbReference type="GO" id="GO:0044205">
    <property type="term" value="P:'de novo' UMP biosynthetic process"/>
    <property type="evidence" value="ECO:0007669"/>
    <property type="project" value="UniProtKB-UniRule"/>
</dbReference>
<dbReference type="GO" id="GO:0006520">
    <property type="term" value="P:amino acid metabolic process"/>
    <property type="evidence" value="ECO:0007669"/>
    <property type="project" value="InterPro"/>
</dbReference>
<dbReference type="FunFam" id="3.40.50.1370:FF:000001">
    <property type="entry name" value="Aspartate carbamoyltransferase"/>
    <property type="match status" value="1"/>
</dbReference>
<dbReference type="FunFam" id="3.40.50.1370:FF:000002">
    <property type="entry name" value="Aspartate carbamoyltransferase 2"/>
    <property type="match status" value="1"/>
</dbReference>
<dbReference type="Gene3D" id="3.40.50.1370">
    <property type="entry name" value="Aspartate/ornithine carbamoyltransferase"/>
    <property type="match status" value="2"/>
</dbReference>
<dbReference type="HAMAP" id="MF_00001">
    <property type="entry name" value="Asp_carb_tr"/>
    <property type="match status" value="1"/>
</dbReference>
<dbReference type="InterPro" id="IPR006132">
    <property type="entry name" value="Asp/Orn_carbamoyltranf_P-bd"/>
</dbReference>
<dbReference type="InterPro" id="IPR006130">
    <property type="entry name" value="Asp/Orn_carbamoylTrfase"/>
</dbReference>
<dbReference type="InterPro" id="IPR036901">
    <property type="entry name" value="Asp/Orn_carbamoylTrfase_sf"/>
</dbReference>
<dbReference type="InterPro" id="IPR002082">
    <property type="entry name" value="Asp_carbamoyltransf"/>
</dbReference>
<dbReference type="InterPro" id="IPR006131">
    <property type="entry name" value="Asp_carbamoyltransf_Asp/Orn-bd"/>
</dbReference>
<dbReference type="NCBIfam" id="TIGR00670">
    <property type="entry name" value="asp_carb_tr"/>
    <property type="match status" value="1"/>
</dbReference>
<dbReference type="NCBIfam" id="NF002032">
    <property type="entry name" value="PRK00856.1"/>
    <property type="match status" value="1"/>
</dbReference>
<dbReference type="PANTHER" id="PTHR45753:SF6">
    <property type="entry name" value="ASPARTATE CARBAMOYLTRANSFERASE"/>
    <property type="match status" value="1"/>
</dbReference>
<dbReference type="PANTHER" id="PTHR45753">
    <property type="entry name" value="ORNITHINE CARBAMOYLTRANSFERASE, MITOCHONDRIAL"/>
    <property type="match status" value="1"/>
</dbReference>
<dbReference type="Pfam" id="PF00185">
    <property type="entry name" value="OTCace"/>
    <property type="match status" value="1"/>
</dbReference>
<dbReference type="Pfam" id="PF02729">
    <property type="entry name" value="OTCace_N"/>
    <property type="match status" value="1"/>
</dbReference>
<dbReference type="PRINTS" id="PR00100">
    <property type="entry name" value="AOTCASE"/>
</dbReference>
<dbReference type="PRINTS" id="PR00101">
    <property type="entry name" value="ATCASE"/>
</dbReference>
<dbReference type="SUPFAM" id="SSF53671">
    <property type="entry name" value="Aspartate/ornithine carbamoyltransferase"/>
    <property type="match status" value="1"/>
</dbReference>
<dbReference type="PROSITE" id="PS00097">
    <property type="entry name" value="CARBAMOYLTRANSFERASE"/>
    <property type="match status" value="1"/>
</dbReference>
<feature type="chain" id="PRO_0000113134" description="Aspartate carbamoyltransferase catalytic subunit">
    <location>
        <begin position="1"/>
        <end position="311"/>
    </location>
</feature>
<feature type="binding site" evidence="1">
    <location>
        <position position="55"/>
    </location>
    <ligand>
        <name>carbamoyl phosphate</name>
        <dbReference type="ChEBI" id="CHEBI:58228"/>
    </ligand>
</feature>
<feature type="binding site" evidence="1">
    <location>
        <position position="56"/>
    </location>
    <ligand>
        <name>carbamoyl phosphate</name>
        <dbReference type="ChEBI" id="CHEBI:58228"/>
    </ligand>
</feature>
<feature type="binding site" evidence="1">
    <location>
        <position position="85"/>
    </location>
    <ligand>
        <name>L-aspartate</name>
        <dbReference type="ChEBI" id="CHEBI:29991"/>
    </ligand>
</feature>
<feature type="binding site" evidence="1">
    <location>
        <position position="106"/>
    </location>
    <ligand>
        <name>carbamoyl phosphate</name>
        <dbReference type="ChEBI" id="CHEBI:58228"/>
    </ligand>
</feature>
<feature type="binding site" evidence="1">
    <location>
        <position position="135"/>
    </location>
    <ligand>
        <name>carbamoyl phosphate</name>
        <dbReference type="ChEBI" id="CHEBI:58228"/>
    </ligand>
</feature>
<feature type="binding site" evidence="1">
    <location>
        <position position="138"/>
    </location>
    <ligand>
        <name>carbamoyl phosphate</name>
        <dbReference type="ChEBI" id="CHEBI:58228"/>
    </ligand>
</feature>
<feature type="binding site" evidence="1">
    <location>
        <position position="168"/>
    </location>
    <ligand>
        <name>L-aspartate</name>
        <dbReference type="ChEBI" id="CHEBI:29991"/>
    </ligand>
</feature>
<feature type="binding site" evidence="1">
    <location>
        <position position="230"/>
    </location>
    <ligand>
        <name>L-aspartate</name>
        <dbReference type="ChEBI" id="CHEBI:29991"/>
    </ligand>
</feature>
<feature type="binding site" evidence="1">
    <location>
        <position position="268"/>
    </location>
    <ligand>
        <name>carbamoyl phosphate</name>
        <dbReference type="ChEBI" id="CHEBI:58228"/>
    </ligand>
</feature>
<feature type="binding site" evidence="1">
    <location>
        <position position="269"/>
    </location>
    <ligand>
        <name>carbamoyl phosphate</name>
        <dbReference type="ChEBI" id="CHEBI:58228"/>
    </ligand>
</feature>
<protein>
    <recommendedName>
        <fullName evidence="1">Aspartate carbamoyltransferase catalytic subunit</fullName>
        <ecNumber evidence="1">2.1.3.2</ecNumber>
    </recommendedName>
    <alternativeName>
        <fullName evidence="1">Aspartate transcarbamylase</fullName>
        <shortName evidence="1">ATCase</shortName>
    </alternativeName>
</protein>